<evidence type="ECO:0000250" key="1"/>
<evidence type="ECO:0000269" key="2">
    <source>
    </source>
</evidence>
<evidence type="ECO:0000305" key="3"/>
<name>SYEC_DICDI</name>
<dbReference type="EC" id="6.1.1.17"/>
<dbReference type="EMBL" id="AAFI02000101">
    <property type="protein sequence ID" value="EAL63699.1"/>
    <property type="molecule type" value="Genomic_DNA"/>
</dbReference>
<dbReference type="RefSeq" id="XP_637203.1">
    <property type="nucleotide sequence ID" value="XM_632111.1"/>
</dbReference>
<dbReference type="SMR" id="Q54KB8"/>
<dbReference type="FunCoup" id="Q54KB8">
    <property type="interactions" value="497"/>
</dbReference>
<dbReference type="STRING" id="44689.Q54KB8"/>
<dbReference type="PaxDb" id="44689-DDB0231321"/>
<dbReference type="EnsemblProtists" id="EAL63699">
    <property type="protein sequence ID" value="EAL63699"/>
    <property type="gene ID" value="DDB_G0287467"/>
</dbReference>
<dbReference type="GeneID" id="8626140"/>
<dbReference type="KEGG" id="ddi:DDB_G0287467"/>
<dbReference type="dictyBase" id="DDB_G0287467">
    <property type="gene designation" value="gluS"/>
</dbReference>
<dbReference type="VEuPathDB" id="AmoebaDB:DDB_G0287467"/>
<dbReference type="eggNOG" id="KOG1147">
    <property type="taxonomic scope" value="Eukaryota"/>
</dbReference>
<dbReference type="HOGENOM" id="CLU_001882_1_2_1"/>
<dbReference type="InParanoid" id="Q54KB8"/>
<dbReference type="OMA" id="CPVVDSH"/>
<dbReference type="PhylomeDB" id="Q54KB8"/>
<dbReference type="PRO" id="PR:Q54KB8"/>
<dbReference type="Proteomes" id="UP000002195">
    <property type="component" value="Chromosome 5"/>
</dbReference>
<dbReference type="GO" id="GO:0005737">
    <property type="term" value="C:cytoplasm"/>
    <property type="evidence" value="ECO:0000250"/>
    <property type="project" value="dictyBase"/>
</dbReference>
<dbReference type="GO" id="GO:0005829">
    <property type="term" value="C:cytosol"/>
    <property type="evidence" value="ECO:0000318"/>
    <property type="project" value="GO_Central"/>
</dbReference>
<dbReference type="GO" id="GO:0017102">
    <property type="term" value="C:methionyl glutamyl tRNA synthetase complex"/>
    <property type="evidence" value="ECO:0000318"/>
    <property type="project" value="GO_Central"/>
</dbReference>
<dbReference type="GO" id="GO:0005524">
    <property type="term" value="F:ATP binding"/>
    <property type="evidence" value="ECO:0007669"/>
    <property type="project" value="UniProtKB-KW"/>
</dbReference>
<dbReference type="GO" id="GO:0004818">
    <property type="term" value="F:glutamate-tRNA ligase activity"/>
    <property type="evidence" value="ECO:0000250"/>
    <property type="project" value="dictyBase"/>
</dbReference>
<dbReference type="GO" id="GO:0003723">
    <property type="term" value="F:RNA binding"/>
    <property type="evidence" value="ECO:0007669"/>
    <property type="project" value="UniProtKB-KW"/>
</dbReference>
<dbReference type="GO" id="GO:0006424">
    <property type="term" value="P:glutamyl-tRNA aminoacylation"/>
    <property type="evidence" value="ECO:0000250"/>
    <property type="project" value="dictyBase"/>
</dbReference>
<dbReference type="CDD" id="cd10289">
    <property type="entry name" value="GST_C_AaRS_like"/>
    <property type="match status" value="1"/>
</dbReference>
<dbReference type="FunFam" id="3.40.50.620:FF:000037">
    <property type="entry name" value="Glutamine--tRNA ligase cytoplasmic"/>
    <property type="match status" value="1"/>
</dbReference>
<dbReference type="FunFam" id="2.40.240.10:FF:000004">
    <property type="entry name" value="Glutamyl-tRNA synthetase, cytoplasmic"/>
    <property type="match status" value="1"/>
</dbReference>
<dbReference type="Gene3D" id="1.20.1050.130">
    <property type="match status" value="1"/>
</dbReference>
<dbReference type="Gene3D" id="3.40.50.620">
    <property type="entry name" value="HUPs"/>
    <property type="match status" value="1"/>
</dbReference>
<dbReference type="Gene3D" id="2.40.240.10">
    <property type="entry name" value="Ribosomal Protein L25, Chain P"/>
    <property type="match status" value="1"/>
</dbReference>
<dbReference type="HAMAP" id="MF_02076">
    <property type="entry name" value="Glu_tRNA_synth_type2"/>
    <property type="match status" value="1"/>
</dbReference>
<dbReference type="InterPro" id="IPR001412">
    <property type="entry name" value="aa-tRNA-synth_I_CS"/>
</dbReference>
<dbReference type="InterPro" id="IPR050132">
    <property type="entry name" value="Gln/Glu-tRNA_Ligase"/>
</dbReference>
<dbReference type="InterPro" id="IPR004526">
    <property type="entry name" value="Glu-tRNA-synth_arc/euk"/>
</dbReference>
<dbReference type="InterPro" id="IPR000924">
    <property type="entry name" value="Glu/Gln-tRNA-synth"/>
</dbReference>
<dbReference type="InterPro" id="IPR020058">
    <property type="entry name" value="Glu/Gln-tRNA-synth_Ib_cat-dom"/>
</dbReference>
<dbReference type="InterPro" id="IPR020059">
    <property type="entry name" value="Glu/Gln-tRNA-synth_Ib_codon-bd"/>
</dbReference>
<dbReference type="InterPro" id="IPR010987">
    <property type="entry name" value="Glutathione-S-Trfase_C-like"/>
</dbReference>
<dbReference type="InterPro" id="IPR036282">
    <property type="entry name" value="Glutathione-S-Trfase_C_sf"/>
</dbReference>
<dbReference type="InterPro" id="IPR004046">
    <property type="entry name" value="GST_C"/>
</dbReference>
<dbReference type="InterPro" id="IPR020056">
    <property type="entry name" value="Rbsml_bL25/Gln-tRNA_synth_N"/>
</dbReference>
<dbReference type="InterPro" id="IPR011035">
    <property type="entry name" value="Ribosomal_bL25/Gln-tRNA_synth"/>
</dbReference>
<dbReference type="InterPro" id="IPR014729">
    <property type="entry name" value="Rossmann-like_a/b/a_fold"/>
</dbReference>
<dbReference type="InterPro" id="IPR049437">
    <property type="entry name" value="tRNA-synt_1c_C2"/>
</dbReference>
<dbReference type="NCBIfam" id="TIGR00463">
    <property type="entry name" value="gltX_arch"/>
    <property type="match status" value="1"/>
</dbReference>
<dbReference type="PANTHER" id="PTHR43097:SF5">
    <property type="entry name" value="GLUTAMATE--TRNA LIGASE"/>
    <property type="match status" value="1"/>
</dbReference>
<dbReference type="PANTHER" id="PTHR43097">
    <property type="entry name" value="GLUTAMINE-TRNA LIGASE"/>
    <property type="match status" value="1"/>
</dbReference>
<dbReference type="Pfam" id="PF00043">
    <property type="entry name" value="GST_C"/>
    <property type="match status" value="1"/>
</dbReference>
<dbReference type="Pfam" id="PF00749">
    <property type="entry name" value="tRNA-synt_1c"/>
    <property type="match status" value="1"/>
</dbReference>
<dbReference type="Pfam" id="PF03950">
    <property type="entry name" value="tRNA-synt_1c_C"/>
    <property type="match status" value="1"/>
</dbReference>
<dbReference type="Pfam" id="PF20974">
    <property type="entry name" value="tRNA-synt_1c_C2"/>
    <property type="match status" value="1"/>
</dbReference>
<dbReference type="PRINTS" id="PR00987">
    <property type="entry name" value="TRNASYNTHGLU"/>
</dbReference>
<dbReference type="SUPFAM" id="SSF47616">
    <property type="entry name" value="GST C-terminal domain-like"/>
    <property type="match status" value="1"/>
</dbReference>
<dbReference type="SUPFAM" id="SSF52374">
    <property type="entry name" value="Nucleotidylyl transferase"/>
    <property type="match status" value="1"/>
</dbReference>
<dbReference type="SUPFAM" id="SSF50715">
    <property type="entry name" value="Ribosomal protein L25-like"/>
    <property type="match status" value="1"/>
</dbReference>
<dbReference type="PROSITE" id="PS00178">
    <property type="entry name" value="AA_TRNA_LIGASE_I"/>
    <property type="match status" value="1"/>
</dbReference>
<dbReference type="PROSITE" id="PS50405">
    <property type="entry name" value="GST_CTER"/>
    <property type="match status" value="1"/>
</dbReference>
<feature type="chain" id="PRO_0000365601" description="Probable glutamate--tRNA ligase, cytoplasmic">
    <location>
        <begin position="1"/>
        <end position="764"/>
    </location>
</feature>
<feature type="short sequence motif" description="'HIGH' region">
    <location>
        <begin position="233"/>
        <end position="242"/>
    </location>
</feature>
<feature type="short sequence motif" description="'KMSKS' region">
    <location>
        <begin position="460"/>
        <end position="464"/>
    </location>
</feature>
<feature type="binding site" evidence="1">
    <location>
        <begin position="228"/>
        <end position="230"/>
    </location>
    <ligand>
        <name>L-glutamate</name>
        <dbReference type="ChEBI" id="CHEBI:29985"/>
    </ligand>
</feature>
<feature type="binding site" evidence="1">
    <location>
        <position position="238"/>
    </location>
    <ligand>
        <name>ATP</name>
        <dbReference type="ChEBI" id="CHEBI:30616"/>
    </ligand>
</feature>
<feature type="binding site" evidence="1">
    <location>
        <position position="264"/>
    </location>
    <ligand>
        <name>L-glutamate</name>
        <dbReference type="ChEBI" id="CHEBI:29985"/>
    </ligand>
</feature>
<feature type="binding site" evidence="1">
    <location>
        <begin position="404"/>
        <end position="408"/>
    </location>
    <ligand>
        <name>L-glutamate</name>
        <dbReference type="ChEBI" id="CHEBI:29985"/>
    </ligand>
</feature>
<feature type="binding site" evidence="1">
    <location>
        <position position="422"/>
    </location>
    <ligand>
        <name>L-glutamate</name>
        <dbReference type="ChEBI" id="CHEBI:29985"/>
    </ligand>
</feature>
<feature type="binding site" evidence="1">
    <location>
        <position position="425"/>
    </location>
    <ligand>
        <name>ATP</name>
        <dbReference type="ChEBI" id="CHEBI:30616"/>
    </ligand>
</feature>
<feature type="binding site" evidence="1">
    <location>
        <begin position="460"/>
        <end position="464"/>
    </location>
    <ligand>
        <name>ATP</name>
        <dbReference type="ChEBI" id="CHEBI:30616"/>
    </ligand>
</feature>
<proteinExistence type="evidence at transcript level"/>
<sequence length="764" mass="85614">MSKAKDTGILRFDDTPLAATFPLVAIITSKVVGGVKIVGRKGLDSTEFSIVGTQDSLKGSYVIAKYLARTTPSLSLYGENALSASKIDEFIDKFAHLKSEKFNEFLKEMNEYLTLRAFLIGFNLTLADIVLFARIKMVKEIQEEINKLGKTIPHLNRWYGYLSQLESFVEADNAFNGKKETKASGKAGAEGTAATTEKVAPQKGAMGWVGNFEALNLPGLVEGKVVTRFPPEPSGYMHIGHCKAAIINNYYAEKYNGKIIIRFDDTNPSKEKEEYVENIIKDINNLGIKYEKITHTSDYFDLIHDYAIQMIKEGIAYCDDTPQVKMSEERDNAIESVHRNNSVEKNLEMFDEMKKATEQGVKCVLRAKLDMAHIDKAFRDPAIYRCNSTPHHRTGDKYKVYPLYDFACPIVDSVEGITHALRSNEYNNKRNLYNHYLEILHLENKPYISDYSRLSFFNVLLSKRKLQHFVDTGLVSGWTDPRLPTLQGITRRGLTVAALKEFILSQGASAANTTLDLGKLFVGNKAVLEPTCPRYTAIAKATAVKFTLSNGPTLPEVKDCLKYAKDPSMGTKKVTFSNNLLLEGDDCNQIKEGEEVTLMNWGNAIVETLQRNENGDVVSMTGKLHLEGDVKKTDKKLSWLSSDCADTVTVVLQDYDYIITKPKLEDGDDLDTFTNKNSKFEIEAFTDENILTLKLNDKIQFERRGFFNVDQVGDGVKPYILIYIPSGPIKPAGAALYPFKKVEKVAAPVNPKPTAKKQEKQSKK</sequence>
<gene>
    <name type="primary">gluS</name>
    <name type="synonym">gluRS</name>
    <name type="ORF">DDB_G0287467</name>
</gene>
<comment type="function">
    <text evidence="1">Catalyzes the attachment of glutamate to tRNA(Glu) in a two-step reaction: glutamate is first activated by ATP to form Glu-AMP and then transferred to the acceptor end of tRNA(Glu).</text>
</comment>
<comment type="catalytic activity">
    <reaction>
        <text>tRNA(Glu) + L-glutamate + ATP = L-glutamyl-tRNA(Glu) + AMP + diphosphate</text>
        <dbReference type="Rhea" id="RHEA:23540"/>
        <dbReference type="Rhea" id="RHEA-COMP:9663"/>
        <dbReference type="Rhea" id="RHEA-COMP:9680"/>
        <dbReference type="ChEBI" id="CHEBI:29985"/>
        <dbReference type="ChEBI" id="CHEBI:30616"/>
        <dbReference type="ChEBI" id="CHEBI:33019"/>
        <dbReference type="ChEBI" id="CHEBI:78442"/>
        <dbReference type="ChEBI" id="CHEBI:78520"/>
        <dbReference type="ChEBI" id="CHEBI:456215"/>
        <dbReference type="EC" id="6.1.1.17"/>
    </reaction>
</comment>
<comment type="subcellular location">
    <subcellularLocation>
        <location evidence="1">Cytoplasm</location>
    </subcellularLocation>
</comment>
<comment type="induction">
    <text evidence="2">Down-regulated by growth on bacteria.</text>
</comment>
<comment type="similarity">
    <text evidence="3">Belongs to the class-I aminoacyl-tRNA synthetase family. Glutamate--tRNA ligase type 2 subfamily.</text>
</comment>
<reference key="1">
    <citation type="journal article" date="2005" name="Nature">
        <title>The genome of the social amoeba Dictyostelium discoideum.</title>
        <authorList>
            <person name="Eichinger L."/>
            <person name="Pachebat J.A."/>
            <person name="Gloeckner G."/>
            <person name="Rajandream M.A."/>
            <person name="Sucgang R."/>
            <person name="Berriman M."/>
            <person name="Song J."/>
            <person name="Olsen R."/>
            <person name="Szafranski K."/>
            <person name="Xu Q."/>
            <person name="Tunggal B."/>
            <person name="Kummerfeld S."/>
            <person name="Madera M."/>
            <person name="Konfortov B.A."/>
            <person name="Rivero F."/>
            <person name="Bankier A.T."/>
            <person name="Lehmann R."/>
            <person name="Hamlin N."/>
            <person name="Davies R."/>
            <person name="Gaudet P."/>
            <person name="Fey P."/>
            <person name="Pilcher K."/>
            <person name="Chen G."/>
            <person name="Saunders D."/>
            <person name="Sodergren E.J."/>
            <person name="Davis P."/>
            <person name="Kerhornou A."/>
            <person name="Nie X."/>
            <person name="Hall N."/>
            <person name="Anjard C."/>
            <person name="Hemphill L."/>
            <person name="Bason N."/>
            <person name="Farbrother P."/>
            <person name="Desany B."/>
            <person name="Just E."/>
            <person name="Morio T."/>
            <person name="Rost R."/>
            <person name="Churcher C.M."/>
            <person name="Cooper J."/>
            <person name="Haydock S."/>
            <person name="van Driessche N."/>
            <person name="Cronin A."/>
            <person name="Goodhead I."/>
            <person name="Muzny D.M."/>
            <person name="Mourier T."/>
            <person name="Pain A."/>
            <person name="Lu M."/>
            <person name="Harper D."/>
            <person name="Lindsay R."/>
            <person name="Hauser H."/>
            <person name="James K.D."/>
            <person name="Quiles M."/>
            <person name="Madan Babu M."/>
            <person name="Saito T."/>
            <person name="Buchrieser C."/>
            <person name="Wardroper A."/>
            <person name="Felder M."/>
            <person name="Thangavelu M."/>
            <person name="Johnson D."/>
            <person name="Knights A."/>
            <person name="Loulseged H."/>
            <person name="Mungall K.L."/>
            <person name="Oliver K."/>
            <person name="Price C."/>
            <person name="Quail M.A."/>
            <person name="Urushihara H."/>
            <person name="Hernandez J."/>
            <person name="Rabbinowitsch E."/>
            <person name="Steffen D."/>
            <person name="Sanders M."/>
            <person name="Ma J."/>
            <person name="Kohara Y."/>
            <person name="Sharp S."/>
            <person name="Simmonds M.N."/>
            <person name="Spiegler S."/>
            <person name="Tivey A."/>
            <person name="Sugano S."/>
            <person name="White B."/>
            <person name="Walker D."/>
            <person name="Woodward J.R."/>
            <person name="Winckler T."/>
            <person name="Tanaka Y."/>
            <person name="Shaulsky G."/>
            <person name="Schleicher M."/>
            <person name="Weinstock G.M."/>
            <person name="Rosenthal A."/>
            <person name="Cox E.C."/>
            <person name="Chisholm R.L."/>
            <person name="Gibbs R.A."/>
            <person name="Loomis W.F."/>
            <person name="Platzer M."/>
            <person name="Kay R.R."/>
            <person name="Williams J.G."/>
            <person name="Dear P.H."/>
            <person name="Noegel A.A."/>
            <person name="Barrell B.G."/>
            <person name="Kuspa A."/>
        </authorList>
    </citation>
    <scope>NUCLEOTIDE SEQUENCE [LARGE SCALE GENOMIC DNA]</scope>
    <source>
        <strain>AX4</strain>
    </source>
</reference>
<reference key="2">
    <citation type="journal article" date="2008" name="BMC Genomics">
        <title>Genome-wide transcriptional changes induced by phagocytosis or growth on bacteria in Dictyostelium.</title>
        <authorList>
            <person name="Sillo A."/>
            <person name="Bloomfield G."/>
            <person name="Balest A."/>
            <person name="Balbo A."/>
            <person name="Pergolizzi B."/>
            <person name="Peracino B."/>
            <person name="Skelton J."/>
            <person name="Ivens A."/>
            <person name="Bozzaro S."/>
        </authorList>
    </citation>
    <scope>INDUCTION [LARGE SCALE ANALYSIS]</scope>
</reference>
<keyword id="KW-0030">Aminoacyl-tRNA synthetase</keyword>
<keyword id="KW-0067">ATP-binding</keyword>
<keyword id="KW-0963">Cytoplasm</keyword>
<keyword id="KW-0436">Ligase</keyword>
<keyword id="KW-0547">Nucleotide-binding</keyword>
<keyword id="KW-0648">Protein biosynthesis</keyword>
<keyword id="KW-1185">Reference proteome</keyword>
<keyword id="KW-0694">RNA-binding</keyword>
<organism>
    <name type="scientific">Dictyostelium discoideum</name>
    <name type="common">Social amoeba</name>
    <dbReference type="NCBI Taxonomy" id="44689"/>
    <lineage>
        <taxon>Eukaryota</taxon>
        <taxon>Amoebozoa</taxon>
        <taxon>Evosea</taxon>
        <taxon>Eumycetozoa</taxon>
        <taxon>Dictyostelia</taxon>
        <taxon>Dictyosteliales</taxon>
        <taxon>Dictyosteliaceae</taxon>
        <taxon>Dictyostelium</taxon>
    </lineage>
</organism>
<accession>Q54KB8</accession>
<protein>
    <recommendedName>
        <fullName>Probable glutamate--tRNA ligase, cytoplasmic</fullName>
        <ecNumber>6.1.1.17</ecNumber>
    </recommendedName>
    <alternativeName>
        <fullName>Glutamyl-tRNA synthetase</fullName>
        <shortName>GluRS</shortName>
    </alternativeName>
</protein>